<sequence>MINDILKDAENRMKKSLEVLADDLAKIRTGRAHPDLLAHVTIDYYGVETPITQAANITVLDARTLGITPWEKGLSSKIEKAILTSDLGLNPTNLGDSLRVPMPALNEERRKELVKLVKSETEAGRVSIRNIRRDANGDIKELLKEKEITEDQAKKAEDDIQKITDKMIAQADALAAKKEQDLMAV</sequence>
<accession>Q0BNT6</accession>
<evidence type="ECO:0000255" key="1">
    <source>
        <dbReference type="HAMAP-Rule" id="MF_00040"/>
    </source>
</evidence>
<feature type="chain" id="PRO_1000003168" description="Ribosome-recycling factor">
    <location>
        <begin position="1"/>
        <end position="185"/>
    </location>
</feature>
<organism>
    <name type="scientific">Francisella tularensis subsp. holarctica (strain OSU18)</name>
    <dbReference type="NCBI Taxonomy" id="393011"/>
    <lineage>
        <taxon>Bacteria</taxon>
        <taxon>Pseudomonadati</taxon>
        <taxon>Pseudomonadota</taxon>
        <taxon>Gammaproteobacteria</taxon>
        <taxon>Thiotrichales</taxon>
        <taxon>Francisellaceae</taxon>
        <taxon>Francisella</taxon>
    </lineage>
</organism>
<gene>
    <name evidence="1" type="primary">frr</name>
    <name type="ordered locus">FTH_0222</name>
</gene>
<reference key="1">
    <citation type="journal article" date="2006" name="J. Bacteriol.">
        <title>Chromosome rearrangement and diversification of Francisella tularensis revealed by the type B (OSU18) genome sequence.</title>
        <authorList>
            <person name="Petrosino J.F."/>
            <person name="Xiang Q."/>
            <person name="Karpathy S.E."/>
            <person name="Jiang H."/>
            <person name="Yerrapragada S."/>
            <person name="Liu Y."/>
            <person name="Gioia J."/>
            <person name="Hemphill L."/>
            <person name="Gonzalez A."/>
            <person name="Raghavan T.M."/>
            <person name="Uzman A."/>
            <person name="Fox G.E."/>
            <person name="Highlander S."/>
            <person name="Reichard M."/>
            <person name="Morton R.J."/>
            <person name="Clinkenbeard K.D."/>
            <person name="Weinstock G.M."/>
        </authorList>
    </citation>
    <scope>NUCLEOTIDE SEQUENCE [LARGE SCALE GENOMIC DNA]</scope>
    <source>
        <strain>OSU18</strain>
    </source>
</reference>
<proteinExistence type="inferred from homology"/>
<comment type="function">
    <text evidence="1">Responsible for the release of ribosomes from messenger RNA at the termination of protein biosynthesis. May increase the efficiency of translation by recycling ribosomes from one round of translation to another.</text>
</comment>
<comment type="subcellular location">
    <subcellularLocation>
        <location evidence="1">Cytoplasm</location>
    </subcellularLocation>
</comment>
<comment type="similarity">
    <text evidence="1">Belongs to the RRF family.</text>
</comment>
<keyword id="KW-0963">Cytoplasm</keyword>
<keyword id="KW-0648">Protein biosynthesis</keyword>
<dbReference type="EMBL" id="CP000437">
    <property type="protein sequence ID" value="ABI82248.1"/>
    <property type="molecule type" value="Genomic_DNA"/>
</dbReference>
<dbReference type="RefSeq" id="WP_003014302.1">
    <property type="nucleotide sequence ID" value="NC_017463.1"/>
</dbReference>
<dbReference type="SMR" id="Q0BNT6"/>
<dbReference type="GeneID" id="75264270"/>
<dbReference type="KEGG" id="fth:FTH_0222"/>
<dbReference type="GO" id="GO:0005829">
    <property type="term" value="C:cytosol"/>
    <property type="evidence" value="ECO:0007669"/>
    <property type="project" value="GOC"/>
</dbReference>
<dbReference type="GO" id="GO:0043023">
    <property type="term" value="F:ribosomal large subunit binding"/>
    <property type="evidence" value="ECO:0007669"/>
    <property type="project" value="TreeGrafter"/>
</dbReference>
<dbReference type="GO" id="GO:0002184">
    <property type="term" value="P:cytoplasmic translational termination"/>
    <property type="evidence" value="ECO:0007669"/>
    <property type="project" value="TreeGrafter"/>
</dbReference>
<dbReference type="CDD" id="cd00520">
    <property type="entry name" value="RRF"/>
    <property type="match status" value="1"/>
</dbReference>
<dbReference type="FunFam" id="1.10.132.20:FF:000001">
    <property type="entry name" value="Ribosome-recycling factor"/>
    <property type="match status" value="1"/>
</dbReference>
<dbReference type="FunFam" id="3.30.1360.40:FF:000001">
    <property type="entry name" value="Ribosome-recycling factor"/>
    <property type="match status" value="1"/>
</dbReference>
<dbReference type="Gene3D" id="3.30.1360.40">
    <property type="match status" value="1"/>
</dbReference>
<dbReference type="Gene3D" id="1.10.132.20">
    <property type="entry name" value="Ribosome-recycling factor"/>
    <property type="match status" value="1"/>
</dbReference>
<dbReference type="HAMAP" id="MF_00040">
    <property type="entry name" value="RRF"/>
    <property type="match status" value="1"/>
</dbReference>
<dbReference type="InterPro" id="IPR002661">
    <property type="entry name" value="Ribosome_recyc_fac"/>
</dbReference>
<dbReference type="InterPro" id="IPR023584">
    <property type="entry name" value="Ribosome_recyc_fac_dom"/>
</dbReference>
<dbReference type="InterPro" id="IPR036191">
    <property type="entry name" value="RRF_sf"/>
</dbReference>
<dbReference type="NCBIfam" id="TIGR00496">
    <property type="entry name" value="frr"/>
    <property type="match status" value="1"/>
</dbReference>
<dbReference type="PANTHER" id="PTHR20982:SF3">
    <property type="entry name" value="MITOCHONDRIAL RIBOSOME RECYCLING FACTOR PSEUDO 1"/>
    <property type="match status" value="1"/>
</dbReference>
<dbReference type="PANTHER" id="PTHR20982">
    <property type="entry name" value="RIBOSOME RECYCLING FACTOR"/>
    <property type="match status" value="1"/>
</dbReference>
<dbReference type="Pfam" id="PF01765">
    <property type="entry name" value="RRF"/>
    <property type="match status" value="1"/>
</dbReference>
<dbReference type="SUPFAM" id="SSF55194">
    <property type="entry name" value="Ribosome recycling factor, RRF"/>
    <property type="match status" value="1"/>
</dbReference>
<name>RRF_FRATO</name>
<protein>
    <recommendedName>
        <fullName evidence="1">Ribosome-recycling factor</fullName>
        <shortName evidence="1">RRF</shortName>
    </recommendedName>
    <alternativeName>
        <fullName evidence="1">Ribosome-releasing factor</fullName>
    </alternativeName>
</protein>